<accession>P25811</accession>
<comment type="function">
    <text evidence="1">Exhibits a very high intrinsic GTPase hydrolysis rate. Involved in the addition of a carboxymethylaminomethyl (cmnm) group at the wobble position (U34) of certain tRNAs, forming tRNA-cmnm(5)s(2)U34.</text>
</comment>
<comment type="cofactor">
    <cofactor evidence="1">
        <name>K(+)</name>
        <dbReference type="ChEBI" id="CHEBI:29103"/>
    </cofactor>
    <text evidence="1">Binds 1 potassium ion per subunit.</text>
</comment>
<comment type="subunit">
    <text evidence="1">Homodimer. Heterotetramer of two MnmE and two MnmG subunits.</text>
</comment>
<comment type="subcellular location">
    <subcellularLocation>
        <location evidence="1">Cytoplasm</location>
    </subcellularLocation>
</comment>
<comment type="disruption phenotype">
    <text evidence="2">No visible phenotype.</text>
</comment>
<comment type="similarity">
    <text evidence="1">Belongs to the TRAFAC class TrmE-Era-EngA-EngB-Septin-like GTPase superfamily. TrmE GTPase family.</text>
</comment>
<reference key="1">
    <citation type="journal article" date="1992" name="Mol. Microbiol.">
        <title>Genes and their organization in the replication origin region of the bacterial chromosome.</title>
        <authorList>
            <person name="Ogasawara N."/>
            <person name="Yoshikawa H."/>
        </authorList>
    </citation>
    <scope>NUCLEOTIDE SEQUENCE [GENOMIC DNA]</scope>
    <source>
        <strain>168 / CRK2000</strain>
    </source>
</reference>
<reference key="2">
    <citation type="journal article" date="1994" name="DNA Res.">
        <title>Systematic sequencing of the 180 kilobase region of the Bacillus subtilis chromosome containing the replication origin.</title>
        <authorList>
            <person name="Ogasawara N."/>
            <person name="Nakai S."/>
            <person name="Yoshikawa H."/>
        </authorList>
    </citation>
    <scope>NUCLEOTIDE SEQUENCE [GENOMIC DNA]</scope>
    <source>
        <strain>168</strain>
    </source>
</reference>
<reference key="3">
    <citation type="journal article" date="1997" name="Nature">
        <title>The complete genome sequence of the Gram-positive bacterium Bacillus subtilis.</title>
        <authorList>
            <person name="Kunst F."/>
            <person name="Ogasawara N."/>
            <person name="Moszer I."/>
            <person name="Albertini A.M."/>
            <person name="Alloni G."/>
            <person name="Azevedo V."/>
            <person name="Bertero M.G."/>
            <person name="Bessieres P."/>
            <person name="Bolotin A."/>
            <person name="Borchert S."/>
            <person name="Borriss R."/>
            <person name="Boursier L."/>
            <person name="Brans A."/>
            <person name="Braun M."/>
            <person name="Brignell S.C."/>
            <person name="Bron S."/>
            <person name="Brouillet S."/>
            <person name="Bruschi C.V."/>
            <person name="Caldwell B."/>
            <person name="Capuano V."/>
            <person name="Carter N.M."/>
            <person name="Choi S.-K."/>
            <person name="Codani J.-J."/>
            <person name="Connerton I.F."/>
            <person name="Cummings N.J."/>
            <person name="Daniel R.A."/>
            <person name="Denizot F."/>
            <person name="Devine K.M."/>
            <person name="Duesterhoeft A."/>
            <person name="Ehrlich S.D."/>
            <person name="Emmerson P.T."/>
            <person name="Entian K.-D."/>
            <person name="Errington J."/>
            <person name="Fabret C."/>
            <person name="Ferrari E."/>
            <person name="Foulger D."/>
            <person name="Fritz C."/>
            <person name="Fujita M."/>
            <person name="Fujita Y."/>
            <person name="Fuma S."/>
            <person name="Galizzi A."/>
            <person name="Galleron N."/>
            <person name="Ghim S.-Y."/>
            <person name="Glaser P."/>
            <person name="Goffeau A."/>
            <person name="Golightly E.J."/>
            <person name="Grandi G."/>
            <person name="Guiseppi G."/>
            <person name="Guy B.J."/>
            <person name="Haga K."/>
            <person name="Haiech J."/>
            <person name="Harwood C.R."/>
            <person name="Henaut A."/>
            <person name="Hilbert H."/>
            <person name="Holsappel S."/>
            <person name="Hosono S."/>
            <person name="Hullo M.-F."/>
            <person name="Itaya M."/>
            <person name="Jones L.-M."/>
            <person name="Joris B."/>
            <person name="Karamata D."/>
            <person name="Kasahara Y."/>
            <person name="Klaerr-Blanchard M."/>
            <person name="Klein C."/>
            <person name="Kobayashi Y."/>
            <person name="Koetter P."/>
            <person name="Koningstein G."/>
            <person name="Krogh S."/>
            <person name="Kumano M."/>
            <person name="Kurita K."/>
            <person name="Lapidus A."/>
            <person name="Lardinois S."/>
            <person name="Lauber J."/>
            <person name="Lazarevic V."/>
            <person name="Lee S.-M."/>
            <person name="Levine A."/>
            <person name="Liu H."/>
            <person name="Masuda S."/>
            <person name="Mauel C."/>
            <person name="Medigue C."/>
            <person name="Medina N."/>
            <person name="Mellado R.P."/>
            <person name="Mizuno M."/>
            <person name="Moestl D."/>
            <person name="Nakai S."/>
            <person name="Noback M."/>
            <person name="Noone D."/>
            <person name="O'Reilly M."/>
            <person name="Ogawa K."/>
            <person name="Ogiwara A."/>
            <person name="Oudega B."/>
            <person name="Park S.-H."/>
            <person name="Parro V."/>
            <person name="Pohl T.M."/>
            <person name="Portetelle D."/>
            <person name="Porwollik S."/>
            <person name="Prescott A.M."/>
            <person name="Presecan E."/>
            <person name="Pujic P."/>
            <person name="Purnelle B."/>
            <person name="Rapoport G."/>
            <person name="Rey M."/>
            <person name="Reynolds S."/>
            <person name="Rieger M."/>
            <person name="Rivolta C."/>
            <person name="Rocha E."/>
            <person name="Roche B."/>
            <person name="Rose M."/>
            <person name="Sadaie Y."/>
            <person name="Sato T."/>
            <person name="Scanlan E."/>
            <person name="Schleich S."/>
            <person name="Schroeter R."/>
            <person name="Scoffone F."/>
            <person name="Sekiguchi J."/>
            <person name="Sekowska A."/>
            <person name="Seror S.J."/>
            <person name="Serror P."/>
            <person name="Shin B.-S."/>
            <person name="Soldo B."/>
            <person name="Sorokin A."/>
            <person name="Tacconi E."/>
            <person name="Takagi T."/>
            <person name="Takahashi H."/>
            <person name="Takemaru K."/>
            <person name="Takeuchi M."/>
            <person name="Tamakoshi A."/>
            <person name="Tanaka T."/>
            <person name="Terpstra P."/>
            <person name="Tognoni A."/>
            <person name="Tosato V."/>
            <person name="Uchiyama S."/>
            <person name="Vandenbol M."/>
            <person name="Vannier F."/>
            <person name="Vassarotti A."/>
            <person name="Viari A."/>
            <person name="Wambutt R."/>
            <person name="Wedler E."/>
            <person name="Wedler H."/>
            <person name="Weitzenegger T."/>
            <person name="Winters P."/>
            <person name="Wipat A."/>
            <person name="Yamamoto H."/>
            <person name="Yamane K."/>
            <person name="Yasumoto K."/>
            <person name="Yata K."/>
            <person name="Yoshida K."/>
            <person name="Yoshikawa H.-F."/>
            <person name="Zumstein E."/>
            <person name="Yoshikawa H."/>
            <person name="Danchin A."/>
        </authorList>
    </citation>
    <scope>NUCLEOTIDE SEQUENCE [LARGE SCALE GENOMIC DNA]</scope>
    <source>
        <strain>168</strain>
    </source>
</reference>
<reference key="4">
    <citation type="journal article" date="2002" name="Microbiology">
        <title>Six GTP-binding proteins of the Era/Obg family are essential for cell growth in Bacillus subtilis.</title>
        <authorList>
            <person name="Morimoto T."/>
            <person name="Loh P.C."/>
            <person name="Hirai T."/>
            <person name="Asai K."/>
            <person name="Kobayashi K."/>
            <person name="Moriya S."/>
            <person name="Ogasawara N."/>
        </authorList>
    </citation>
    <scope>DISRUPTION PHENOTYPE</scope>
    <source>
        <strain>CRK6000</strain>
    </source>
</reference>
<keyword id="KW-0963">Cytoplasm</keyword>
<keyword id="KW-0342">GTP-binding</keyword>
<keyword id="KW-0378">Hydrolase</keyword>
<keyword id="KW-0460">Magnesium</keyword>
<keyword id="KW-0479">Metal-binding</keyword>
<keyword id="KW-0547">Nucleotide-binding</keyword>
<keyword id="KW-0630">Potassium</keyword>
<keyword id="KW-1185">Reference proteome</keyword>
<keyword id="KW-0819">tRNA processing</keyword>
<sequence length="459" mass="50974">MDTIAAISTPMGEGAIAIVRLSGPEAIQIADKIYKGPKGKTLSSVESHTIHYGHIVDRPSDRVVEEVMVSVLKAPRTFTREDVIEINCHGGIVTVNQVLQLALREGARLAEPGEFTKRAFLNGRIDLSQAEAVMDLIRAKTDRAMNVAMNQMEGRLSALVRRLRSEILETLAHVEVNIDYPEYDDVEEMTHQILVEKATAVKKEIETLLRTSEQGKILREGLSTVIIGRPNVGKSSLLNSLVHEAKAIVTDIPGTTRDVIEEYVNVRGVPLRLVDTAGIRETEDIVERIGVERSRQVLKEADLILLVLNYSEELSEEDVKLFEAVEGMDVIVILNKTDLEPKIDTERVRELANGRPVVTTSLLKEEGINDLEEAIQSLFYTGAIESGDLTYVSNTRHITILQQAKRAIEDALSGIEQDVPIDMVQIDLTRCWELLGEIIGDSVHESLIDQLFSQFCLGK</sequence>
<organism>
    <name type="scientific">Bacillus subtilis (strain 168)</name>
    <dbReference type="NCBI Taxonomy" id="224308"/>
    <lineage>
        <taxon>Bacteria</taxon>
        <taxon>Bacillati</taxon>
        <taxon>Bacillota</taxon>
        <taxon>Bacilli</taxon>
        <taxon>Bacillales</taxon>
        <taxon>Bacillaceae</taxon>
        <taxon>Bacillus</taxon>
    </lineage>
</organism>
<name>MNME_BACSU</name>
<proteinExistence type="inferred from homology"/>
<dbReference type="EC" id="3.6.-.-" evidence="1"/>
<dbReference type="EMBL" id="X62539">
    <property type="protein sequence ID" value="CAA44403.1"/>
    <property type="molecule type" value="Genomic_DNA"/>
</dbReference>
<dbReference type="EMBL" id="D26185">
    <property type="protein sequence ID" value="BAA05232.1"/>
    <property type="molecule type" value="Genomic_DNA"/>
</dbReference>
<dbReference type="EMBL" id="AL009126">
    <property type="protein sequence ID" value="CAB16139.1"/>
    <property type="molecule type" value="Genomic_DNA"/>
</dbReference>
<dbReference type="PIR" id="I40439">
    <property type="entry name" value="JQ1215"/>
</dbReference>
<dbReference type="RefSeq" id="NP_391982.1">
    <property type="nucleotide sequence ID" value="NC_000964.3"/>
</dbReference>
<dbReference type="RefSeq" id="WP_003244507.1">
    <property type="nucleotide sequence ID" value="NZ_OZ025638.1"/>
</dbReference>
<dbReference type="SMR" id="P25811"/>
<dbReference type="FunCoup" id="P25811">
    <property type="interactions" value="703"/>
</dbReference>
<dbReference type="IntAct" id="P25811">
    <property type="interactions" value="4"/>
</dbReference>
<dbReference type="STRING" id="224308.BSU41020"/>
<dbReference type="jPOST" id="P25811"/>
<dbReference type="PaxDb" id="224308-BSU41020"/>
<dbReference type="EnsemblBacteria" id="CAB16139">
    <property type="protein sequence ID" value="CAB16139"/>
    <property type="gene ID" value="BSU_41020"/>
</dbReference>
<dbReference type="GeneID" id="937927"/>
<dbReference type="KEGG" id="bsu:BSU41020"/>
<dbReference type="PATRIC" id="fig|224308.179.peg.4444"/>
<dbReference type="eggNOG" id="COG0486">
    <property type="taxonomic scope" value="Bacteria"/>
</dbReference>
<dbReference type="InParanoid" id="P25811"/>
<dbReference type="OrthoDB" id="9805918at2"/>
<dbReference type="PhylomeDB" id="P25811"/>
<dbReference type="BioCyc" id="BSUB:BSU41020-MONOMER"/>
<dbReference type="Proteomes" id="UP000001570">
    <property type="component" value="Chromosome"/>
</dbReference>
<dbReference type="GO" id="GO:0005737">
    <property type="term" value="C:cytoplasm"/>
    <property type="evidence" value="ECO:0000318"/>
    <property type="project" value="GO_Central"/>
</dbReference>
<dbReference type="GO" id="GO:0005829">
    <property type="term" value="C:cytosol"/>
    <property type="evidence" value="ECO:0000318"/>
    <property type="project" value="GO_Central"/>
</dbReference>
<dbReference type="GO" id="GO:0005525">
    <property type="term" value="F:GTP binding"/>
    <property type="evidence" value="ECO:0007669"/>
    <property type="project" value="UniProtKB-UniRule"/>
</dbReference>
<dbReference type="GO" id="GO:0003924">
    <property type="term" value="F:GTPase activity"/>
    <property type="evidence" value="ECO:0007669"/>
    <property type="project" value="UniProtKB-UniRule"/>
</dbReference>
<dbReference type="GO" id="GO:0046872">
    <property type="term" value="F:metal ion binding"/>
    <property type="evidence" value="ECO:0007669"/>
    <property type="project" value="UniProtKB-KW"/>
</dbReference>
<dbReference type="GO" id="GO:0030488">
    <property type="term" value="P:tRNA methylation"/>
    <property type="evidence" value="ECO:0000318"/>
    <property type="project" value="GO_Central"/>
</dbReference>
<dbReference type="GO" id="GO:0002098">
    <property type="term" value="P:tRNA wobble uridine modification"/>
    <property type="evidence" value="ECO:0000318"/>
    <property type="project" value="GO_Central"/>
</dbReference>
<dbReference type="CDD" id="cd04164">
    <property type="entry name" value="trmE"/>
    <property type="match status" value="1"/>
</dbReference>
<dbReference type="CDD" id="cd14858">
    <property type="entry name" value="TrmE_N"/>
    <property type="match status" value="1"/>
</dbReference>
<dbReference type="FunFam" id="3.30.1360.120:FF:000003">
    <property type="entry name" value="tRNA modification GTPase MnmE"/>
    <property type="match status" value="1"/>
</dbReference>
<dbReference type="FunFam" id="3.40.50.300:FF:000494">
    <property type="entry name" value="tRNA modification GTPase MnmE"/>
    <property type="match status" value="1"/>
</dbReference>
<dbReference type="Gene3D" id="3.40.50.300">
    <property type="entry name" value="P-loop containing nucleotide triphosphate hydrolases"/>
    <property type="match status" value="1"/>
</dbReference>
<dbReference type="Gene3D" id="3.30.1360.120">
    <property type="entry name" value="Probable tRNA modification gtpase trme, domain 1"/>
    <property type="match status" value="1"/>
</dbReference>
<dbReference type="Gene3D" id="1.20.120.430">
    <property type="entry name" value="tRNA modification GTPase MnmE domain 2"/>
    <property type="match status" value="1"/>
</dbReference>
<dbReference type="HAMAP" id="MF_00379">
    <property type="entry name" value="GTPase_MnmE"/>
    <property type="match status" value="1"/>
</dbReference>
<dbReference type="InterPro" id="IPR031168">
    <property type="entry name" value="G_TrmE"/>
</dbReference>
<dbReference type="InterPro" id="IPR006073">
    <property type="entry name" value="GTP-bd"/>
</dbReference>
<dbReference type="InterPro" id="IPR018948">
    <property type="entry name" value="GTP-bd_TrmE_N"/>
</dbReference>
<dbReference type="InterPro" id="IPR004520">
    <property type="entry name" value="GTPase_MnmE"/>
</dbReference>
<dbReference type="InterPro" id="IPR027368">
    <property type="entry name" value="MnmE_dom2"/>
</dbReference>
<dbReference type="InterPro" id="IPR025867">
    <property type="entry name" value="MnmE_helical"/>
</dbReference>
<dbReference type="InterPro" id="IPR027417">
    <property type="entry name" value="P-loop_NTPase"/>
</dbReference>
<dbReference type="InterPro" id="IPR005225">
    <property type="entry name" value="Small_GTP-bd"/>
</dbReference>
<dbReference type="InterPro" id="IPR027266">
    <property type="entry name" value="TrmE/GcvT_dom1"/>
</dbReference>
<dbReference type="NCBIfam" id="TIGR00450">
    <property type="entry name" value="mnmE_trmE_thdF"/>
    <property type="match status" value="1"/>
</dbReference>
<dbReference type="NCBIfam" id="NF003661">
    <property type="entry name" value="PRK05291.1-3"/>
    <property type="match status" value="1"/>
</dbReference>
<dbReference type="NCBIfam" id="TIGR00231">
    <property type="entry name" value="small_GTP"/>
    <property type="match status" value="1"/>
</dbReference>
<dbReference type="PANTHER" id="PTHR42714">
    <property type="entry name" value="TRNA MODIFICATION GTPASE GTPBP3"/>
    <property type="match status" value="1"/>
</dbReference>
<dbReference type="PANTHER" id="PTHR42714:SF2">
    <property type="entry name" value="TRNA MODIFICATION GTPASE GTPBP3, MITOCHONDRIAL"/>
    <property type="match status" value="1"/>
</dbReference>
<dbReference type="Pfam" id="PF01926">
    <property type="entry name" value="MMR_HSR1"/>
    <property type="match status" value="1"/>
</dbReference>
<dbReference type="Pfam" id="PF12631">
    <property type="entry name" value="MnmE_helical"/>
    <property type="match status" value="1"/>
</dbReference>
<dbReference type="Pfam" id="PF10396">
    <property type="entry name" value="TrmE_N"/>
    <property type="match status" value="1"/>
</dbReference>
<dbReference type="PRINTS" id="PR00449">
    <property type="entry name" value="RASTRNSFRMNG"/>
</dbReference>
<dbReference type="SUPFAM" id="SSF52540">
    <property type="entry name" value="P-loop containing nucleoside triphosphate hydrolases"/>
    <property type="match status" value="1"/>
</dbReference>
<dbReference type="SUPFAM" id="SSF116878">
    <property type="entry name" value="TrmE connector domain"/>
    <property type="match status" value="1"/>
</dbReference>
<dbReference type="PROSITE" id="PS51709">
    <property type="entry name" value="G_TRME"/>
    <property type="match status" value="1"/>
</dbReference>
<feature type="chain" id="PRO_0000188850" description="tRNA modification GTPase MnmE">
    <location>
        <begin position="1"/>
        <end position="459"/>
    </location>
</feature>
<feature type="domain" description="TrmE-type G">
    <location>
        <begin position="221"/>
        <end position="380"/>
    </location>
</feature>
<feature type="binding site" evidence="1">
    <location>
        <position position="20"/>
    </location>
    <ligand>
        <name>(6S)-5-formyl-5,6,7,8-tetrahydrofolate</name>
        <dbReference type="ChEBI" id="CHEBI:57457"/>
    </ligand>
</feature>
<feature type="binding site" evidence="1">
    <location>
        <position position="85"/>
    </location>
    <ligand>
        <name>(6S)-5-formyl-5,6,7,8-tetrahydrofolate</name>
        <dbReference type="ChEBI" id="CHEBI:57457"/>
    </ligand>
</feature>
<feature type="binding site" evidence="1">
    <location>
        <position position="124"/>
    </location>
    <ligand>
        <name>(6S)-5-formyl-5,6,7,8-tetrahydrofolate</name>
        <dbReference type="ChEBI" id="CHEBI:57457"/>
    </ligand>
</feature>
<feature type="binding site" evidence="1">
    <location>
        <begin position="231"/>
        <end position="236"/>
    </location>
    <ligand>
        <name>GTP</name>
        <dbReference type="ChEBI" id="CHEBI:37565"/>
    </ligand>
</feature>
<feature type="binding site" evidence="1">
    <location>
        <position position="231"/>
    </location>
    <ligand>
        <name>K(+)</name>
        <dbReference type="ChEBI" id="CHEBI:29103"/>
    </ligand>
</feature>
<feature type="binding site" evidence="1">
    <location>
        <position position="235"/>
    </location>
    <ligand>
        <name>Mg(2+)</name>
        <dbReference type="ChEBI" id="CHEBI:18420"/>
    </ligand>
</feature>
<feature type="binding site" evidence="1">
    <location>
        <begin position="250"/>
        <end position="256"/>
    </location>
    <ligand>
        <name>GTP</name>
        <dbReference type="ChEBI" id="CHEBI:37565"/>
    </ligand>
</feature>
<feature type="binding site" evidence="1">
    <location>
        <position position="250"/>
    </location>
    <ligand>
        <name>K(+)</name>
        <dbReference type="ChEBI" id="CHEBI:29103"/>
    </ligand>
</feature>
<feature type="binding site" evidence="1">
    <location>
        <position position="252"/>
    </location>
    <ligand>
        <name>K(+)</name>
        <dbReference type="ChEBI" id="CHEBI:29103"/>
    </ligand>
</feature>
<feature type="binding site" evidence="1">
    <location>
        <position position="255"/>
    </location>
    <ligand>
        <name>K(+)</name>
        <dbReference type="ChEBI" id="CHEBI:29103"/>
    </ligand>
</feature>
<feature type="binding site" evidence="1">
    <location>
        <position position="256"/>
    </location>
    <ligand>
        <name>Mg(2+)</name>
        <dbReference type="ChEBI" id="CHEBI:18420"/>
    </ligand>
</feature>
<feature type="binding site" evidence="1">
    <location>
        <begin position="275"/>
        <end position="278"/>
    </location>
    <ligand>
        <name>GTP</name>
        <dbReference type="ChEBI" id="CHEBI:37565"/>
    </ligand>
</feature>
<feature type="binding site" evidence="1">
    <location>
        <position position="459"/>
    </location>
    <ligand>
        <name>(6S)-5-formyl-5,6,7,8-tetrahydrofolate</name>
        <dbReference type="ChEBI" id="CHEBI:57457"/>
    </ligand>
</feature>
<protein>
    <recommendedName>
        <fullName evidence="1">tRNA modification GTPase MnmE</fullName>
        <ecNumber evidence="1">3.6.-.-</ecNumber>
    </recommendedName>
</protein>
<gene>
    <name evidence="1" type="primary">mnmE</name>
    <name evidence="1" type="synonym">thdF</name>
    <name evidence="1" type="synonym">trmE</name>
    <name type="ordered locus">BSU41020</name>
</gene>
<evidence type="ECO:0000255" key="1">
    <source>
        <dbReference type="HAMAP-Rule" id="MF_00379"/>
    </source>
</evidence>
<evidence type="ECO:0000269" key="2">
    <source>
    </source>
</evidence>